<sequence>MAQTTVTVVATKRDALDPYIKILQNRSNDIDVSFSSYLKPDNNEQQQKENEDTELSIFEARSYFSENGSNDSRCQTRNLSGPRFSSVASAKVSSFTVGQTASSEASWNSQTGLLSNKNRQGSDRDGRRSSKKGPRWFFRRRACPCSSSKSVQVQESKPRIAVPKTGSDRIVSNRIVHSHQTISSPEPIRLTIPSNTVTRSIDYTANKEARAPVSNFSFPTLNETSQLSENPKNPVLNHIKPVRIEPALLPIKPVLNPTSPKGVIIDEEATSDASSDLFEIESFSTQTAARPWAPPVRDSMEETVSEYGYEPSEASVTWSVMTAEPASAVAANFSRIALSSSSTAFSGYDKKRTGLLNCHCEKAVMVNGDKRLVQPVKSVGVQNDVAGKVLCNNGSSKLSVTSRPRQ</sequence>
<feature type="chain" id="PRO_0000393343" description="Protein PHYTOCHROME KINASE SUBSTRATE 4">
    <location>
        <begin position="1"/>
        <end position="406"/>
    </location>
</feature>
<feature type="region of interest" description="Disordered" evidence="1">
    <location>
        <begin position="106"/>
        <end position="133"/>
    </location>
</feature>
<feature type="compositionally biased region" description="Polar residues" evidence="1">
    <location>
        <begin position="106"/>
        <end position="119"/>
    </location>
</feature>
<reference key="1">
    <citation type="journal article" date="2000" name="Nature">
        <title>Sequence and analysis of chromosome 5 of the plant Arabidopsis thaliana.</title>
        <authorList>
            <person name="Tabata S."/>
            <person name="Kaneko T."/>
            <person name="Nakamura Y."/>
            <person name="Kotani H."/>
            <person name="Kato T."/>
            <person name="Asamizu E."/>
            <person name="Miyajima N."/>
            <person name="Sasamoto S."/>
            <person name="Kimura T."/>
            <person name="Hosouchi T."/>
            <person name="Kawashima K."/>
            <person name="Kohara M."/>
            <person name="Matsumoto M."/>
            <person name="Matsuno A."/>
            <person name="Muraki A."/>
            <person name="Nakayama S."/>
            <person name="Nakazaki N."/>
            <person name="Naruo K."/>
            <person name="Okumura S."/>
            <person name="Shinpo S."/>
            <person name="Takeuchi C."/>
            <person name="Wada T."/>
            <person name="Watanabe A."/>
            <person name="Yamada M."/>
            <person name="Yasuda M."/>
            <person name="Sato S."/>
            <person name="de la Bastide M."/>
            <person name="Huang E."/>
            <person name="Spiegel L."/>
            <person name="Gnoj L."/>
            <person name="O'Shaughnessy A."/>
            <person name="Preston R."/>
            <person name="Habermann K."/>
            <person name="Murray J."/>
            <person name="Johnson D."/>
            <person name="Rohlfing T."/>
            <person name="Nelson J."/>
            <person name="Stoneking T."/>
            <person name="Pepin K."/>
            <person name="Spieth J."/>
            <person name="Sekhon M."/>
            <person name="Armstrong J."/>
            <person name="Becker M."/>
            <person name="Belter E."/>
            <person name="Cordum H."/>
            <person name="Cordes M."/>
            <person name="Courtney L."/>
            <person name="Courtney W."/>
            <person name="Dante M."/>
            <person name="Du H."/>
            <person name="Edwards J."/>
            <person name="Fryman J."/>
            <person name="Haakensen B."/>
            <person name="Lamar E."/>
            <person name="Latreille P."/>
            <person name="Leonard S."/>
            <person name="Meyer R."/>
            <person name="Mulvaney E."/>
            <person name="Ozersky P."/>
            <person name="Riley A."/>
            <person name="Strowmatt C."/>
            <person name="Wagner-McPherson C."/>
            <person name="Wollam A."/>
            <person name="Yoakum M."/>
            <person name="Bell M."/>
            <person name="Dedhia N."/>
            <person name="Parnell L."/>
            <person name="Shah R."/>
            <person name="Rodriguez M."/>
            <person name="Hoon See L."/>
            <person name="Vil D."/>
            <person name="Baker J."/>
            <person name="Kirchoff K."/>
            <person name="Toth K."/>
            <person name="King L."/>
            <person name="Bahret A."/>
            <person name="Miller B."/>
            <person name="Marra M.A."/>
            <person name="Martienssen R."/>
            <person name="McCombie W.R."/>
            <person name="Wilson R.K."/>
            <person name="Murphy G."/>
            <person name="Bancroft I."/>
            <person name="Volckaert G."/>
            <person name="Wambutt R."/>
            <person name="Duesterhoeft A."/>
            <person name="Stiekema W."/>
            <person name="Pohl T."/>
            <person name="Entian K.-D."/>
            <person name="Terryn N."/>
            <person name="Hartley N."/>
            <person name="Bent E."/>
            <person name="Johnson S."/>
            <person name="Langham S.-A."/>
            <person name="McCullagh B."/>
            <person name="Robben J."/>
            <person name="Grymonprez B."/>
            <person name="Zimmermann W."/>
            <person name="Ramsperger U."/>
            <person name="Wedler H."/>
            <person name="Balke K."/>
            <person name="Wedler E."/>
            <person name="Peters S."/>
            <person name="van Staveren M."/>
            <person name="Dirkse W."/>
            <person name="Mooijman P."/>
            <person name="Klein Lankhorst R."/>
            <person name="Weitzenegger T."/>
            <person name="Bothe G."/>
            <person name="Rose M."/>
            <person name="Hauf J."/>
            <person name="Berneiser S."/>
            <person name="Hempel S."/>
            <person name="Feldpausch M."/>
            <person name="Lamberth S."/>
            <person name="Villarroel R."/>
            <person name="Gielen J."/>
            <person name="Ardiles W."/>
            <person name="Bents O."/>
            <person name="Lemcke K."/>
            <person name="Kolesov G."/>
            <person name="Mayer K.F.X."/>
            <person name="Rudd S."/>
            <person name="Schoof H."/>
            <person name="Schueller C."/>
            <person name="Zaccaria P."/>
            <person name="Mewes H.-W."/>
            <person name="Bevan M."/>
            <person name="Fransz P.F."/>
        </authorList>
    </citation>
    <scope>NUCLEOTIDE SEQUENCE [LARGE SCALE GENOMIC DNA]</scope>
    <source>
        <strain>cv. Columbia</strain>
    </source>
</reference>
<reference key="2">
    <citation type="journal article" date="2017" name="Plant J.">
        <title>Araport11: a complete reannotation of the Arabidopsis thaliana reference genome.</title>
        <authorList>
            <person name="Cheng C.Y."/>
            <person name="Krishnakumar V."/>
            <person name="Chan A.P."/>
            <person name="Thibaud-Nissen F."/>
            <person name="Schobel S."/>
            <person name="Town C.D."/>
        </authorList>
    </citation>
    <scope>GENOME REANNOTATION</scope>
    <source>
        <strain>cv. Columbia</strain>
    </source>
</reference>
<reference key="3">
    <citation type="submission" date="2005-03" db="EMBL/GenBank/DDBJ databases">
        <title>Arabidopsis ORF clones.</title>
        <authorList>
            <person name="Kim C.J."/>
            <person name="Chen H."/>
            <person name="Cheuk R."/>
            <person name="Shinn P."/>
            <person name="Ecker J.R."/>
        </authorList>
    </citation>
    <scope>NUCLEOTIDE SEQUENCE [LARGE SCALE MRNA]</scope>
</reference>
<reference key="4">
    <citation type="journal article" date="2005" name="J. Mol. Evol.">
        <title>Plant photoreceptors: phylogenetic overview.</title>
        <authorList>
            <person name="Lariguet P."/>
            <person name="Dunand C."/>
        </authorList>
    </citation>
    <scope>GENE FAMILY</scope>
    <scope>NOMENCLATURE</scope>
</reference>
<reference key="5">
    <citation type="journal article" date="2006" name="Proc. Natl. Acad. Sci. U.S.A.">
        <title>PHYTOCHROME KINASE SUBSTRATE 1 is a phototropin 1 binding protein required for phototropism.</title>
        <authorList>
            <person name="Lariguet P."/>
            <person name="Schepens I."/>
            <person name="Hodgson D."/>
            <person name="Pedmale U.V."/>
            <person name="Trevisan M."/>
            <person name="Kami C."/>
            <person name="de Carbonnel M."/>
            <person name="Alonso J.M."/>
            <person name="Ecker J.R."/>
            <person name="Liscum E."/>
            <person name="Fankhauser C."/>
        </authorList>
    </citation>
    <scope>FUNCTION</scope>
    <scope>DISRUPTION PHENOTYPE</scope>
</reference>
<reference key="6">
    <citation type="journal article" date="2008" name="Plant Physiol.">
        <title>PHYTOCHROME KINASE SUBSTRATE1 regulates root phototropism and gravitropism.</title>
        <authorList>
            <person name="Boccalandro H.E."/>
            <person name="De Simone S.N."/>
            <person name="Bergmann-Honsberger A."/>
            <person name="Schepens I."/>
            <person name="Fankhauser C."/>
            <person name="Casal J.J."/>
        </authorList>
    </citation>
    <scope>DISRUPTION PHENOTYPE</scope>
</reference>
<reference key="7">
    <citation type="journal article" date="2008" name="Plant Physiol.">
        <title>PHYTOCHROME KINASE SUBSTRATE4 modulates phytochrome-mediated control of hypocotyl growth orientation.</title>
        <authorList>
            <person name="Schepens I."/>
            <person name="Boccalandro H.E."/>
            <person name="Kami C."/>
            <person name="Casal J.J."/>
            <person name="Fankhauser C."/>
        </authorList>
    </citation>
    <scope>FUNCTION</scope>
    <scope>INTERACTION WITH PHYA AND PHYB</scope>
    <scope>INDUCTION</scope>
    <scope>TISSUE SPECIFICITY</scope>
    <scope>DISRUPTION PHENOTYPE</scope>
</reference>
<reference key="8">
    <citation type="journal article" date="2009" name="Plant Physiol.">
        <title>Large-scale Arabidopsis phosphoproteome profiling reveals novel chloroplast kinase substrates and phosphorylation networks.</title>
        <authorList>
            <person name="Reiland S."/>
            <person name="Messerli G."/>
            <person name="Baerenfaller K."/>
            <person name="Gerrits B."/>
            <person name="Endler A."/>
            <person name="Grossmann J."/>
            <person name="Gruissem W."/>
            <person name="Baginsky S."/>
        </authorList>
    </citation>
    <scope>IDENTIFICATION BY MASS SPECTROMETRY [LARGE SCALE ANALYSIS]</scope>
</reference>
<reference key="9">
    <citation type="journal article" date="2010" name="Plant Physiol.">
        <title>The Arabidopsis PHYTOCHROME KINASE SUBSTRATE2 protein is a phototropin signaling element that regulates leaf flattening and leaf positioning.</title>
        <authorList>
            <person name="de Carbonnel M."/>
            <person name="Davis P."/>
            <person name="Roelfsema M.R."/>
            <person name="Inoue S."/>
            <person name="Schepens I."/>
            <person name="Lariguet P."/>
            <person name="Geisler M."/>
            <person name="Shimazaki K."/>
            <person name="Hangarter R."/>
            <person name="Fankhauser C."/>
        </authorList>
    </citation>
    <scope>FUNCTION</scope>
    <scope>DISRUPTION PHENOTYPE</scope>
</reference>
<name>PKS4_ARATH</name>
<comment type="function">
    <text evidence="2 4 5">Modulates phytochrome-mediated control of hypocotyl growth orientation. Involved in PHYA and PHYB signaling. Acts as an inhibitor of asymmetric growth. Not involved in the control of leaf flattening.</text>
</comment>
<comment type="subunit">
    <text evidence="4">Interacts in vitro with PHYA and PHYB.</text>
</comment>
<comment type="interaction">
    <interactant intactId="EBI-25513821">
        <id>Q9FYE2</id>
    </interactant>
    <interactant intactId="EBI-25519982">
        <id>Q1ECQ5</id>
        <label>At4g02485</label>
    </interactant>
    <organismsDiffer>false</organismsDiffer>
    <experiments>3</experiments>
</comment>
<comment type="interaction">
    <interactant intactId="EBI-25513821">
        <id>Q9FYE2</id>
    </interactant>
    <interactant intactId="EBI-4426649">
        <id>Q17TI5</id>
        <label>BRX</label>
    </interactant>
    <organismsDiffer>false</organismsDiffer>
    <experiments>3</experiments>
</comment>
<comment type="tissue specificity">
    <text evidence="4">Expressed in the hypocotyl elongation zone. Not found in the root elongation zone.</text>
</comment>
<comment type="induction">
    <text evidence="4">Down-regulated by light.</text>
</comment>
<comment type="disruption phenotype">
    <text evidence="2 3 4 5">Reduced phototropic response. Altered light-induced deviation from vertical growth and decreased phytochrome-mediated inhibition of hypocotyl elongation and cotyledon opening. No visible phenotype at the level of leaf flattening and leaf positioning. No effect on negative root phototropism.</text>
</comment>
<comment type="miscellaneous">
    <text>PKS1, PKS2 and/or PKS4 are essential for phototropism but not for inhibition of gravitropism under long-term blue light irradiation.</text>
</comment>
<comment type="similarity">
    <text evidence="6">Belongs to the PKS family.</text>
</comment>
<evidence type="ECO:0000256" key="1">
    <source>
        <dbReference type="SAM" id="MobiDB-lite"/>
    </source>
</evidence>
<evidence type="ECO:0000269" key="2">
    <source>
    </source>
</evidence>
<evidence type="ECO:0000269" key="3">
    <source>
    </source>
</evidence>
<evidence type="ECO:0000269" key="4">
    <source>
    </source>
</evidence>
<evidence type="ECO:0000269" key="5">
    <source>
    </source>
</evidence>
<evidence type="ECO:0000305" key="6"/>
<keyword id="KW-0607">Phytochrome signaling pathway</keyword>
<keyword id="KW-1185">Reference proteome</keyword>
<organism>
    <name type="scientific">Arabidopsis thaliana</name>
    <name type="common">Mouse-ear cress</name>
    <dbReference type="NCBI Taxonomy" id="3702"/>
    <lineage>
        <taxon>Eukaryota</taxon>
        <taxon>Viridiplantae</taxon>
        <taxon>Streptophyta</taxon>
        <taxon>Embryophyta</taxon>
        <taxon>Tracheophyta</taxon>
        <taxon>Spermatophyta</taxon>
        <taxon>Magnoliopsida</taxon>
        <taxon>eudicotyledons</taxon>
        <taxon>Gunneridae</taxon>
        <taxon>Pentapetalae</taxon>
        <taxon>rosids</taxon>
        <taxon>malvids</taxon>
        <taxon>Brassicales</taxon>
        <taxon>Brassicaceae</taxon>
        <taxon>Camelineae</taxon>
        <taxon>Arabidopsis</taxon>
    </lineage>
</organism>
<proteinExistence type="evidence at protein level"/>
<dbReference type="EMBL" id="AL391716">
    <property type="protein sequence ID" value="CAC05501.1"/>
    <property type="molecule type" value="Genomic_DNA"/>
</dbReference>
<dbReference type="EMBL" id="CP002688">
    <property type="protein sequence ID" value="AED90709.1"/>
    <property type="molecule type" value="Genomic_DNA"/>
</dbReference>
<dbReference type="EMBL" id="BT015323">
    <property type="protein sequence ID" value="AAT99802.1"/>
    <property type="molecule type" value="mRNA"/>
</dbReference>
<dbReference type="EMBL" id="BT021129">
    <property type="protein sequence ID" value="AAX22264.1"/>
    <property type="molecule type" value="mRNA"/>
</dbReference>
<dbReference type="RefSeq" id="NP_196039.1">
    <property type="nucleotide sequence ID" value="NM_120501.3"/>
</dbReference>
<dbReference type="BioGRID" id="15577">
    <property type="interactions" value="4"/>
</dbReference>
<dbReference type="FunCoup" id="Q9FYE2">
    <property type="interactions" value="197"/>
</dbReference>
<dbReference type="IntAct" id="Q9FYE2">
    <property type="interactions" value="2"/>
</dbReference>
<dbReference type="STRING" id="3702.Q9FYE2"/>
<dbReference type="iPTMnet" id="Q9FYE2"/>
<dbReference type="PaxDb" id="3702-AT5G04190.1"/>
<dbReference type="ProteomicsDB" id="226180"/>
<dbReference type="EnsemblPlants" id="AT5G04190.1">
    <property type="protein sequence ID" value="AT5G04190.1"/>
    <property type="gene ID" value="AT5G04190"/>
</dbReference>
<dbReference type="GeneID" id="830297"/>
<dbReference type="Gramene" id="AT5G04190.1">
    <property type="protein sequence ID" value="AT5G04190.1"/>
    <property type="gene ID" value="AT5G04190"/>
</dbReference>
<dbReference type="KEGG" id="ath:AT5G04190"/>
<dbReference type="Araport" id="AT5G04190"/>
<dbReference type="TAIR" id="AT5G04190">
    <property type="gene designation" value="PKS4"/>
</dbReference>
<dbReference type="eggNOG" id="ENOG502QWEH">
    <property type="taxonomic scope" value="Eukaryota"/>
</dbReference>
<dbReference type="HOGENOM" id="CLU_722304_0_0_1"/>
<dbReference type="InParanoid" id="Q9FYE2"/>
<dbReference type="OMA" id="CNPRSIS"/>
<dbReference type="PhylomeDB" id="Q9FYE2"/>
<dbReference type="PRO" id="PR:Q9FYE2"/>
<dbReference type="Proteomes" id="UP000006548">
    <property type="component" value="Chromosome 5"/>
</dbReference>
<dbReference type="ExpressionAtlas" id="Q9FYE2">
    <property type="expression patterns" value="baseline and differential"/>
</dbReference>
<dbReference type="GO" id="GO:0009638">
    <property type="term" value="P:phototropism"/>
    <property type="evidence" value="ECO:0000316"/>
    <property type="project" value="TAIR"/>
</dbReference>
<dbReference type="GO" id="GO:0010017">
    <property type="term" value="P:red or far-red light signaling pathway"/>
    <property type="evidence" value="ECO:0000315"/>
    <property type="project" value="TAIR"/>
</dbReference>
<dbReference type="GO" id="GO:0009585">
    <property type="term" value="P:red, far-red light phototransduction"/>
    <property type="evidence" value="ECO:0007669"/>
    <property type="project" value="UniProtKB-KW"/>
</dbReference>
<dbReference type="InterPro" id="IPR039615">
    <property type="entry name" value="PKS"/>
</dbReference>
<dbReference type="PANTHER" id="PTHR33781">
    <property type="entry name" value="PROTEIN PHYTOCHROME KINASE SUBSTRATE 1-RELATED"/>
    <property type="match status" value="1"/>
</dbReference>
<dbReference type="PANTHER" id="PTHR33781:SF1">
    <property type="entry name" value="PROTEIN PHYTOCHROME KINASE SUBSTRATE 4"/>
    <property type="match status" value="1"/>
</dbReference>
<protein>
    <recommendedName>
        <fullName>Protein PHYTOCHROME KINASE SUBSTRATE 4</fullName>
    </recommendedName>
</protein>
<accession>Q9FYE2</accession>
<gene>
    <name type="primary">PKS4</name>
    <name type="ordered locus">At5g04190</name>
    <name type="ORF">F21E1.110</name>
</gene>